<name>LYPGN_MYCTO</name>
<protein>
    <recommendedName>
        <fullName evidence="1">Lysoplasmalogenase</fullName>
        <ecNumber evidence="1">3.3.2.2</ecNumber>
    </recommendedName>
</protein>
<organism>
    <name type="scientific">Mycobacterium tuberculosis (strain CDC 1551 / Oshkosh)</name>
    <dbReference type="NCBI Taxonomy" id="83331"/>
    <lineage>
        <taxon>Bacteria</taxon>
        <taxon>Bacillati</taxon>
        <taxon>Actinomycetota</taxon>
        <taxon>Actinomycetes</taxon>
        <taxon>Mycobacteriales</taxon>
        <taxon>Mycobacteriaceae</taxon>
        <taxon>Mycobacterium</taxon>
        <taxon>Mycobacterium tuberculosis complex</taxon>
    </lineage>
</organism>
<keyword id="KW-1003">Cell membrane</keyword>
<keyword id="KW-0378">Hydrolase</keyword>
<keyword id="KW-0443">Lipid metabolism</keyword>
<keyword id="KW-0472">Membrane</keyword>
<keyword id="KW-1185">Reference proteome</keyword>
<keyword id="KW-0812">Transmembrane</keyword>
<keyword id="KW-1133">Transmembrane helix</keyword>
<evidence type="ECO:0000250" key="1">
    <source>
        <dbReference type="UniProtKB" id="P9WG51"/>
    </source>
</evidence>
<evidence type="ECO:0000255" key="2"/>
<evidence type="ECO:0000305" key="3"/>
<gene>
    <name type="ordered locus">MT1445</name>
</gene>
<feature type="chain" id="PRO_0000428423" description="Lysoplasmalogenase">
    <location>
        <begin position="1"/>
        <end position="261"/>
    </location>
</feature>
<feature type="transmembrane region" description="Helical" evidence="2">
    <location>
        <begin position="29"/>
        <end position="49"/>
    </location>
</feature>
<feature type="transmembrane region" description="Helical" evidence="2">
    <location>
        <begin position="65"/>
        <end position="85"/>
    </location>
</feature>
<feature type="transmembrane region" description="Helical" evidence="2">
    <location>
        <begin position="90"/>
        <end position="107"/>
    </location>
</feature>
<feature type="transmembrane region" description="Helical" evidence="2">
    <location>
        <begin position="111"/>
        <end position="133"/>
    </location>
</feature>
<feature type="transmembrane region" description="Helical" evidence="2">
    <location>
        <begin position="146"/>
        <end position="166"/>
    </location>
</feature>
<feature type="transmembrane region" description="Helical" evidence="2">
    <location>
        <begin position="172"/>
        <end position="192"/>
    </location>
</feature>
<feature type="transmembrane region" description="Helical" evidence="2">
    <location>
        <begin position="197"/>
        <end position="217"/>
    </location>
</feature>
<feature type="transmembrane region" description="Helical" evidence="2">
    <location>
        <begin position="227"/>
        <end position="247"/>
    </location>
</feature>
<comment type="function">
    <text evidence="1">Specifically hydrolyzes the vinyl ether bond of lysoplasmenylcholine (pLPC) and lysoplasmenylethanolamine (pLPE) to release a fatty aldehyde and glycerophospho-choline or glycerophospho-ethanolamine.</text>
</comment>
<comment type="catalytic activity">
    <reaction evidence="1">
        <text>a 1-O-(1Z-alkenyl)-sn-glycero-3-phosphocholine + H2O = a 2,3-saturated aldehyde + sn-glycerol 3-phosphocholine</text>
        <dbReference type="Rhea" id="RHEA:22544"/>
        <dbReference type="ChEBI" id="CHEBI:15377"/>
        <dbReference type="ChEBI" id="CHEBI:16870"/>
        <dbReference type="ChEBI" id="CHEBI:73359"/>
        <dbReference type="ChEBI" id="CHEBI:77287"/>
        <dbReference type="EC" id="3.3.2.2"/>
    </reaction>
</comment>
<comment type="catalytic activity">
    <reaction evidence="1">
        <text>a 1-O-(1Z-alkenyl)-sn-glycero-3-phosphoethanolamine + H2O = a 2,3-saturated aldehyde + sn-glycero-3-phosphoethanolamine</text>
        <dbReference type="Rhea" id="RHEA:16905"/>
        <dbReference type="ChEBI" id="CHEBI:15377"/>
        <dbReference type="ChEBI" id="CHEBI:73359"/>
        <dbReference type="ChEBI" id="CHEBI:77288"/>
        <dbReference type="ChEBI" id="CHEBI:143890"/>
        <dbReference type="EC" id="3.3.2.2"/>
    </reaction>
</comment>
<comment type="subcellular location">
    <subcellularLocation>
        <location evidence="1">Cell membrane</location>
        <topology evidence="2">Multi-pass membrane protein</topology>
    </subcellularLocation>
</comment>
<comment type="similarity">
    <text evidence="3">Belongs to the TMEM86 family.</text>
</comment>
<reference key="1">
    <citation type="journal article" date="2002" name="J. Bacteriol.">
        <title>Whole-genome comparison of Mycobacterium tuberculosis clinical and laboratory strains.</title>
        <authorList>
            <person name="Fleischmann R.D."/>
            <person name="Alland D."/>
            <person name="Eisen J.A."/>
            <person name="Carpenter L."/>
            <person name="White O."/>
            <person name="Peterson J.D."/>
            <person name="DeBoy R.T."/>
            <person name="Dodson R.J."/>
            <person name="Gwinn M.L."/>
            <person name="Haft D.H."/>
            <person name="Hickey E.K."/>
            <person name="Kolonay J.F."/>
            <person name="Nelson W.C."/>
            <person name="Umayam L.A."/>
            <person name="Ermolaeva M.D."/>
            <person name="Salzberg S.L."/>
            <person name="Delcher A."/>
            <person name="Utterback T.R."/>
            <person name="Weidman J.F."/>
            <person name="Khouri H.M."/>
            <person name="Gill J."/>
            <person name="Mikula A."/>
            <person name="Bishai W."/>
            <person name="Jacobs W.R. Jr."/>
            <person name="Venter J.C."/>
            <person name="Fraser C.M."/>
        </authorList>
    </citation>
    <scope>NUCLEOTIDE SEQUENCE [LARGE SCALE GENOMIC DNA]</scope>
    <source>
        <strain>CDC 1551 / Oshkosh</strain>
    </source>
</reference>
<proteinExistence type="inferred from homology"/>
<dbReference type="EC" id="3.3.2.2" evidence="1"/>
<dbReference type="EMBL" id="AE000516">
    <property type="protein sequence ID" value="AAK45710.1"/>
    <property type="molecule type" value="Genomic_DNA"/>
</dbReference>
<dbReference type="PIR" id="F70900">
    <property type="entry name" value="F70900"/>
</dbReference>
<dbReference type="KEGG" id="mtc:MT1445"/>
<dbReference type="HOGENOM" id="CLU_079086_3_0_11"/>
<dbReference type="Proteomes" id="UP000001020">
    <property type="component" value="Chromosome"/>
</dbReference>
<dbReference type="GO" id="GO:0005886">
    <property type="term" value="C:plasma membrane"/>
    <property type="evidence" value="ECO:0007669"/>
    <property type="project" value="UniProtKB-SubCell"/>
</dbReference>
<dbReference type="GO" id="GO:0016787">
    <property type="term" value="F:hydrolase activity"/>
    <property type="evidence" value="ECO:0007669"/>
    <property type="project" value="UniProtKB-KW"/>
</dbReference>
<dbReference type="GO" id="GO:0006629">
    <property type="term" value="P:lipid metabolic process"/>
    <property type="evidence" value="ECO:0007669"/>
    <property type="project" value="UniProtKB-KW"/>
</dbReference>
<dbReference type="InterPro" id="IPR012506">
    <property type="entry name" value="TMEM86B-like"/>
</dbReference>
<dbReference type="PANTHER" id="PTHR31885">
    <property type="entry name" value="GH04784P"/>
    <property type="match status" value="1"/>
</dbReference>
<dbReference type="PANTHER" id="PTHR31885:SF6">
    <property type="entry name" value="GH04784P"/>
    <property type="match status" value="1"/>
</dbReference>
<dbReference type="Pfam" id="PF07947">
    <property type="entry name" value="YhhN"/>
    <property type="match status" value="1"/>
</dbReference>
<accession>P9WG50</accession>
<accession>L0T858</accession>
<accession>P64837</accession>
<accession>P71669</accession>
<sequence>MGSIAGFSSAVLSKLGIPVPYAPRLLAGGWVVAGWAGLAYGVYLTVIALRLPPGSELTGHAMLQPAFKASMAVLLAAAAVAHPIGRERRWLVPALLLSATGDWLLAIPWWTWAFVFGLGAFLLAHLCFIGALLPLARQAAPSRGRVAAVVAMCVASAGLLVWFWPHLGKDNLTIPVTVYIVALSAMVCTALLARLPTIWTAVGAVCFAASDSMIGIGRFILGNEALAVPIWWSYAAAEILITAGFFFGREVPDNAAAPTDS</sequence>